<comment type="function">
    <text evidence="2">Translocates 4-amino-4-deoxy-L-arabinose-phosphoundecaprenol (alpha-L-Ara4N-phosphoundecaprenol) from the cytoplasmic to the periplasmic side of the inner membrane.</text>
</comment>
<comment type="pathway">
    <text evidence="2">Bacterial outer membrane biogenesis; lipopolysaccharide biosynthesis.</text>
</comment>
<comment type="subunit">
    <text evidence="2">Heterodimer of ArnE and ArnF.</text>
</comment>
<comment type="subcellular location">
    <subcellularLocation>
        <location evidence="2">Cell inner membrane</location>
        <topology evidence="2">Multi-pass membrane protein</topology>
    </subcellularLocation>
</comment>
<comment type="similarity">
    <text evidence="2">Belongs to the ArnE family.</text>
</comment>
<reference key="1">
    <citation type="journal article" date="2011" name="Proc. Natl. Acad. Sci. U.S.A.">
        <title>Genomic anatomy of Escherichia coli O157:H7 outbreaks.</title>
        <authorList>
            <person name="Eppinger M."/>
            <person name="Mammel M.K."/>
            <person name="Leclerc J.E."/>
            <person name="Ravel J."/>
            <person name="Cebula T.A."/>
        </authorList>
    </citation>
    <scope>NUCLEOTIDE SEQUENCE [LARGE SCALE GENOMIC DNA]</scope>
    <source>
        <strain>EC4115 / EHEC</strain>
    </source>
</reference>
<feature type="chain" id="PRO_0000382965" description="Probable 4-amino-4-deoxy-L-arabinose-phosphoundecaprenol flippase subunit ArnE">
    <location>
        <begin position="1"/>
        <end position="111"/>
    </location>
</feature>
<feature type="topological domain" description="Cytoplasmic" evidence="1">
    <location>
        <begin position="1"/>
        <end position="35"/>
    </location>
</feature>
<feature type="transmembrane region" description="Helical" evidence="2">
    <location>
        <begin position="36"/>
        <end position="56"/>
    </location>
</feature>
<feature type="topological domain" description="Periplasmic" evidence="1">
    <location>
        <begin position="57"/>
        <end position="60"/>
    </location>
</feature>
<feature type="transmembrane region" description="Helical" evidence="2">
    <location>
        <begin position="61"/>
        <end position="81"/>
    </location>
</feature>
<feature type="topological domain" description="Cytoplasmic" evidence="1">
    <location>
        <begin position="82"/>
        <end position="87"/>
    </location>
</feature>
<feature type="transmembrane region" description="Helical" evidence="2">
    <location>
        <begin position="88"/>
        <end position="108"/>
    </location>
</feature>
<feature type="topological domain" description="Periplasmic" evidence="1">
    <location>
        <begin position="109"/>
        <end position="111"/>
    </location>
</feature>
<feature type="domain" description="EamA" evidence="2">
    <location>
        <begin position="40"/>
        <end position="109"/>
    </location>
</feature>
<evidence type="ECO:0000255" key="1"/>
<evidence type="ECO:0000255" key="2">
    <source>
        <dbReference type="HAMAP-Rule" id="MF_01869"/>
    </source>
</evidence>
<keyword id="KW-0997">Cell inner membrane</keyword>
<keyword id="KW-1003">Cell membrane</keyword>
<keyword id="KW-0441">Lipid A biosynthesis</keyword>
<keyword id="KW-0444">Lipid biosynthesis</keyword>
<keyword id="KW-0443">Lipid metabolism</keyword>
<keyword id="KW-0448">Lipopolysaccharide biosynthesis</keyword>
<keyword id="KW-0472">Membrane</keyword>
<keyword id="KW-0812">Transmembrane</keyword>
<keyword id="KW-1133">Transmembrane helix</keyword>
<keyword id="KW-0813">Transport</keyword>
<dbReference type="EMBL" id="CP001164">
    <property type="protein sequence ID" value="ACI39517.1"/>
    <property type="molecule type" value="Genomic_DNA"/>
</dbReference>
<dbReference type="RefSeq" id="WP_000638034.1">
    <property type="nucleotide sequence ID" value="NC_011353.1"/>
</dbReference>
<dbReference type="SMR" id="B5YXQ1"/>
<dbReference type="KEGG" id="ecf:ECH74115_3399"/>
<dbReference type="HOGENOM" id="CLU_131462_5_1_6"/>
<dbReference type="UniPathway" id="UPA00030"/>
<dbReference type="GO" id="GO:0005886">
    <property type="term" value="C:plasma membrane"/>
    <property type="evidence" value="ECO:0007669"/>
    <property type="project" value="UniProtKB-SubCell"/>
</dbReference>
<dbReference type="GO" id="GO:1901505">
    <property type="term" value="F:carbohydrate derivative transmembrane transporter activity"/>
    <property type="evidence" value="ECO:0007669"/>
    <property type="project" value="InterPro"/>
</dbReference>
<dbReference type="GO" id="GO:0009245">
    <property type="term" value="P:lipid A biosynthetic process"/>
    <property type="evidence" value="ECO:0007669"/>
    <property type="project" value="UniProtKB-UniRule"/>
</dbReference>
<dbReference type="GO" id="GO:0009103">
    <property type="term" value="P:lipopolysaccharide biosynthetic process"/>
    <property type="evidence" value="ECO:0007669"/>
    <property type="project" value="UniProtKB-UniRule"/>
</dbReference>
<dbReference type="FunFam" id="1.10.3730.20:FF:000002">
    <property type="entry name" value="Probable 4-amino-4-deoxy-L-arabinose-phosphoundecaprenol flippase subunit ArnE"/>
    <property type="match status" value="1"/>
</dbReference>
<dbReference type="Gene3D" id="1.10.3730.20">
    <property type="match status" value="1"/>
</dbReference>
<dbReference type="HAMAP" id="MF_01869">
    <property type="entry name" value="Flippase_ArnE"/>
    <property type="match status" value="1"/>
</dbReference>
<dbReference type="InterPro" id="IPR000620">
    <property type="entry name" value="EamA_dom"/>
</dbReference>
<dbReference type="InterPro" id="IPR022883">
    <property type="entry name" value="Flippase_ArnE"/>
</dbReference>
<dbReference type="InterPro" id="IPR000390">
    <property type="entry name" value="Small_drug/metabolite_transptr"/>
</dbReference>
<dbReference type="NCBIfam" id="NF011625">
    <property type="entry name" value="PRK15051.1"/>
    <property type="match status" value="1"/>
</dbReference>
<dbReference type="PANTHER" id="PTHR30561:SF23">
    <property type="entry name" value="4-AMINO-4-DEOXY-L-ARABINOSE-PHOSPHOUNDECAPRENOL FLIPPASE SUBUNIT ARNE-RELATED"/>
    <property type="match status" value="1"/>
</dbReference>
<dbReference type="PANTHER" id="PTHR30561">
    <property type="entry name" value="SMR FAMILY PROTON-DEPENDENT DRUG EFFLUX TRANSPORTER SUGE"/>
    <property type="match status" value="1"/>
</dbReference>
<dbReference type="Pfam" id="PF00892">
    <property type="entry name" value="EamA"/>
    <property type="match status" value="1"/>
</dbReference>
<dbReference type="SUPFAM" id="SSF103481">
    <property type="entry name" value="Multidrug resistance efflux transporter EmrE"/>
    <property type="match status" value="1"/>
</dbReference>
<name>ARNE_ECO5E</name>
<organism>
    <name type="scientific">Escherichia coli O157:H7 (strain EC4115 / EHEC)</name>
    <dbReference type="NCBI Taxonomy" id="444450"/>
    <lineage>
        <taxon>Bacteria</taxon>
        <taxon>Pseudomonadati</taxon>
        <taxon>Pseudomonadota</taxon>
        <taxon>Gammaproteobacteria</taxon>
        <taxon>Enterobacterales</taxon>
        <taxon>Enterobacteriaceae</taxon>
        <taxon>Escherichia</taxon>
    </lineage>
</organism>
<protein>
    <recommendedName>
        <fullName evidence="2">Probable 4-amino-4-deoxy-L-arabinose-phosphoundecaprenol flippase subunit ArnE</fullName>
        <shortName evidence="2">L-Ara4N-phosphoundecaprenol flippase subunit ArnE</shortName>
    </recommendedName>
    <alternativeName>
        <fullName evidence="2">Undecaprenyl phosphate-aminoarabinose flippase subunit ArnE</fullName>
    </alternativeName>
</protein>
<sequence>MIWLTLVFASLLSVAGQLCQKQATCFVAISKRRKHIVLWLGLALACLGLAMVLWLLVLQNVPVGIAYPMLSLNFVWVTLAAVKLWHEPVSPRHWCGVAFIIGGIVILGSTV</sequence>
<accession>B5YXQ1</accession>
<proteinExistence type="inferred from homology"/>
<gene>
    <name evidence="2" type="primary">arnE</name>
    <name type="ordered locus">ECH74115_3399</name>
</gene>